<protein>
    <recommendedName>
        <fullName>Uncharacterized protein UL3</fullName>
    </recommendedName>
</protein>
<name>UL03_HCMVA</name>
<feature type="chain" id="PRO_0000115301" description="Uncharacterized protein UL3">
    <location>
        <begin position="1"/>
        <end position="105"/>
    </location>
</feature>
<accession>P16775</accession>
<proteinExistence type="predicted"/>
<organismHost>
    <name type="scientific">Homo sapiens</name>
    <name type="common">Human</name>
    <dbReference type="NCBI Taxonomy" id="9606"/>
</organismHost>
<reference key="1">
    <citation type="journal article" date="1990" name="Curr. Top. Microbiol. Immunol.">
        <title>Analysis of the protein-coding content of the sequence of human cytomegalovirus strain AD169.</title>
        <authorList>
            <person name="Chee M.S."/>
            <person name="Bankier A.T."/>
            <person name="Beck S."/>
            <person name="Bohni R."/>
            <person name="Brown C.M."/>
            <person name="Cerny R."/>
            <person name="Horsnell T."/>
            <person name="Hutchison C.A. III"/>
            <person name="Kouzarides T."/>
            <person name="Martignetti J.A."/>
            <person name="Preddie E."/>
            <person name="Satchwell S.C."/>
            <person name="Tomlinson P."/>
            <person name="Weston K.M."/>
            <person name="Barrell B.G."/>
        </authorList>
    </citation>
    <scope>NUCLEOTIDE SEQUENCE [LARGE SCALE GENOMIC DNA]</scope>
</reference>
<gene>
    <name type="primary">UL3</name>
</gene>
<sequence>MYLQANRDDNFFAERTSGCITRLASDSLCLFHSSFIHIQTSCDTRIILRGKTLLLSSHWVPYPLRIPHYPPSWSRTIPNRIRYIPATQGDVYHGRRLGRDPYSRR</sequence>
<organism>
    <name type="scientific">Human cytomegalovirus (strain AD169)</name>
    <name type="common">HHV-5</name>
    <name type="synonym">Human herpesvirus 5</name>
    <dbReference type="NCBI Taxonomy" id="10360"/>
    <lineage>
        <taxon>Viruses</taxon>
        <taxon>Duplodnaviria</taxon>
        <taxon>Heunggongvirae</taxon>
        <taxon>Peploviricota</taxon>
        <taxon>Herviviricetes</taxon>
        <taxon>Herpesvirales</taxon>
        <taxon>Orthoherpesviridae</taxon>
        <taxon>Betaherpesvirinae</taxon>
        <taxon>Cytomegalovirus</taxon>
        <taxon>Cytomegalovirus humanbeta5</taxon>
        <taxon>Human cytomegalovirus</taxon>
    </lineage>
</organism>
<dbReference type="EMBL" id="X17403">
    <property type="protein sequence ID" value="CAA35436.1"/>
    <property type="molecule type" value="Genomic_DNA"/>
</dbReference>
<dbReference type="PIR" id="S09766">
    <property type="entry name" value="S09766"/>
</dbReference>
<dbReference type="Proteomes" id="UP000008991">
    <property type="component" value="Segment"/>
</dbReference>